<keyword id="KW-1185">Reference proteome</keyword>
<keyword id="KW-0687">Ribonucleoprotein</keyword>
<keyword id="KW-0689">Ribosomal protein</keyword>
<keyword id="KW-0694">RNA-binding</keyword>
<keyword id="KW-0699">rRNA-binding</keyword>
<comment type="function">
    <text evidence="1">Forms part of the ribosomal stalk, playing a central role in the interaction of the ribosome with GTP-bound translation factors.</text>
</comment>
<comment type="subunit">
    <text evidence="1">Part of the ribosomal stalk of the 50S ribosomal subunit. The N-terminus interacts with L11 and the large rRNA to form the base of the stalk. The C-terminus forms an elongated spine to which L12 dimers bind in a sequential fashion forming a multimeric L10(L12)X complex.</text>
</comment>
<comment type="similarity">
    <text evidence="1">Belongs to the universal ribosomal protein uL10 family.</text>
</comment>
<reference key="1">
    <citation type="submission" date="2007-05" db="EMBL/GenBank/DDBJ databases">
        <title>Complete sequence of Geobacter uraniireducens Rf4.</title>
        <authorList>
            <consortium name="US DOE Joint Genome Institute"/>
            <person name="Copeland A."/>
            <person name="Lucas S."/>
            <person name="Lapidus A."/>
            <person name="Barry K."/>
            <person name="Detter J.C."/>
            <person name="Glavina del Rio T."/>
            <person name="Hammon N."/>
            <person name="Israni S."/>
            <person name="Dalin E."/>
            <person name="Tice H."/>
            <person name="Pitluck S."/>
            <person name="Chertkov O."/>
            <person name="Brettin T."/>
            <person name="Bruce D."/>
            <person name="Han C."/>
            <person name="Schmutz J."/>
            <person name="Larimer F."/>
            <person name="Land M."/>
            <person name="Hauser L."/>
            <person name="Kyrpides N."/>
            <person name="Mikhailova N."/>
            <person name="Shelobolina E."/>
            <person name="Aklujkar M."/>
            <person name="Lovley D."/>
            <person name="Richardson P."/>
        </authorList>
    </citation>
    <scope>NUCLEOTIDE SEQUENCE [LARGE SCALE GENOMIC DNA]</scope>
    <source>
        <strain>ATCC BAA-1134 / JCM 13001 / Rf4</strain>
    </source>
</reference>
<accession>A5GAX9</accession>
<name>RL10_GEOUR</name>
<evidence type="ECO:0000255" key="1">
    <source>
        <dbReference type="HAMAP-Rule" id="MF_00362"/>
    </source>
</evidence>
<evidence type="ECO:0000305" key="2"/>
<sequence length="174" mass="18675">MNKEGKHQLVAEVHDKLQRAKAVFLADFRGMNVGQATDLRNELRKADVEYKVIKNTLLELASKGTDKEALNPYFAGPTAVAISYDDPVAAAKVLSRFAKEQTNPFTLKAGVLSGKAISPADIQALADLPSREVLIAKMLGSMQAPATNFVGVLAAVPGSFVRALNAIRIKKEGN</sequence>
<proteinExistence type="inferred from homology"/>
<feature type="chain" id="PRO_1000079544" description="Large ribosomal subunit protein uL10">
    <location>
        <begin position="1"/>
        <end position="174"/>
    </location>
</feature>
<protein>
    <recommendedName>
        <fullName evidence="1">Large ribosomal subunit protein uL10</fullName>
    </recommendedName>
    <alternativeName>
        <fullName evidence="2">50S ribosomal protein L10</fullName>
    </alternativeName>
</protein>
<dbReference type="EMBL" id="CP000698">
    <property type="protein sequence ID" value="ABQ25265.1"/>
    <property type="molecule type" value="Genomic_DNA"/>
</dbReference>
<dbReference type="RefSeq" id="WP_011937989.1">
    <property type="nucleotide sequence ID" value="NC_009483.1"/>
</dbReference>
<dbReference type="SMR" id="A5GAX9"/>
<dbReference type="STRING" id="351605.Gura_1059"/>
<dbReference type="KEGG" id="gur:Gura_1059"/>
<dbReference type="HOGENOM" id="CLU_092227_0_0_7"/>
<dbReference type="OrthoDB" id="3186107at2"/>
<dbReference type="Proteomes" id="UP000006695">
    <property type="component" value="Chromosome"/>
</dbReference>
<dbReference type="GO" id="GO:0015934">
    <property type="term" value="C:large ribosomal subunit"/>
    <property type="evidence" value="ECO:0007669"/>
    <property type="project" value="InterPro"/>
</dbReference>
<dbReference type="GO" id="GO:0070180">
    <property type="term" value="F:large ribosomal subunit rRNA binding"/>
    <property type="evidence" value="ECO:0007669"/>
    <property type="project" value="UniProtKB-UniRule"/>
</dbReference>
<dbReference type="GO" id="GO:0003735">
    <property type="term" value="F:structural constituent of ribosome"/>
    <property type="evidence" value="ECO:0007669"/>
    <property type="project" value="InterPro"/>
</dbReference>
<dbReference type="GO" id="GO:0006412">
    <property type="term" value="P:translation"/>
    <property type="evidence" value="ECO:0007669"/>
    <property type="project" value="UniProtKB-UniRule"/>
</dbReference>
<dbReference type="CDD" id="cd05797">
    <property type="entry name" value="Ribosomal_L10"/>
    <property type="match status" value="1"/>
</dbReference>
<dbReference type="Gene3D" id="3.30.70.1730">
    <property type="match status" value="1"/>
</dbReference>
<dbReference type="Gene3D" id="6.10.250.290">
    <property type="match status" value="1"/>
</dbReference>
<dbReference type="HAMAP" id="MF_00362">
    <property type="entry name" value="Ribosomal_uL10"/>
    <property type="match status" value="1"/>
</dbReference>
<dbReference type="InterPro" id="IPR001790">
    <property type="entry name" value="Ribosomal_uL10"/>
</dbReference>
<dbReference type="InterPro" id="IPR043141">
    <property type="entry name" value="Ribosomal_uL10-like_sf"/>
</dbReference>
<dbReference type="InterPro" id="IPR022973">
    <property type="entry name" value="Ribosomal_uL10_bac"/>
</dbReference>
<dbReference type="InterPro" id="IPR047865">
    <property type="entry name" value="Ribosomal_uL10_bac_type"/>
</dbReference>
<dbReference type="InterPro" id="IPR002363">
    <property type="entry name" value="Ribosomal_uL10_CS_bac"/>
</dbReference>
<dbReference type="NCBIfam" id="NF000955">
    <property type="entry name" value="PRK00099.1-1"/>
    <property type="match status" value="1"/>
</dbReference>
<dbReference type="PANTHER" id="PTHR11560">
    <property type="entry name" value="39S RIBOSOMAL PROTEIN L10, MITOCHONDRIAL"/>
    <property type="match status" value="1"/>
</dbReference>
<dbReference type="Pfam" id="PF00466">
    <property type="entry name" value="Ribosomal_L10"/>
    <property type="match status" value="1"/>
</dbReference>
<dbReference type="SUPFAM" id="SSF160369">
    <property type="entry name" value="Ribosomal protein L10-like"/>
    <property type="match status" value="1"/>
</dbReference>
<dbReference type="PROSITE" id="PS01109">
    <property type="entry name" value="RIBOSOMAL_L10"/>
    <property type="match status" value="1"/>
</dbReference>
<organism>
    <name type="scientific">Geotalea uraniireducens (strain Rf4)</name>
    <name type="common">Geobacter uraniireducens</name>
    <dbReference type="NCBI Taxonomy" id="351605"/>
    <lineage>
        <taxon>Bacteria</taxon>
        <taxon>Pseudomonadati</taxon>
        <taxon>Thermodesulfobacteriota</taxon>
        <taxon>Desulfuromonadia</taxon>
        <taxon>Geobacterales</taxon>
        <taxon>Geobacteraceae</taxon>
        <taxon>Geotalea</taxon>
    </lineage>
</organism>
<gene>
    <name evidence="1" type="primary">rplJ</name>
    <name type="ordered locus">Gura_1059</name>
</gene>